<dbReference type="EMBL" id="AF087922">
    <property type="protein sequence ID" value="AAF37312.1"/>
    <property type="molecule type" value="Genomic_DNA"/>
</dbReference>
<dbReference type="EMBL" id="U04681">
    <property type="protein sequence ID" value="AAA18345.1"/>
    <property type="molecule type" value="Genomic_DNA"/>
</dbReference>
<dbReference type="EMBL" id="AF399534">
    <property type="protein sequence ID" value="AAK95019.1"/>
    <property type="molecule type" value="Genomic_DNA"/>
</dbReference>
<dbReference type="PIR" id="I38473">
    <property type="entry name" value="I38473"/>
</dbReference>
<dbReference type="SMR" id="P47884"/>
<dbReference type="FunCoup" id="P47884">
    <property type="interactions" value="256"/>
</dbReference>
<dbReference type="IntAct" id="P47884">
    <property type="interactions" value="25"/>
</dbReference>
<dbReference type="GlyCosmos" id="P47884">
    <property type="glycosylation" value="1 site, No reported glycans"/>
</dbReference>
<dbReference type="GlyGen" id="P47884">
    <property type="glycosylation" value="2 sites, 1 O-linked glycan (1 site)"/>
</dbReference>
<dbReference type="BioMuta" id="HGNC:8185"/>
<dbReference type="DMDM" id="37538298"/>
<dbReference type="AGR" id="HGNC:8185"/>
<dbReference type="GeneCards" id="OR1D4"/>
<dbReference type="HGNC" id="HGNC:8185">
    <property type="gene designation" value="OR1D4"/>
</dbReference>
<dbReference type="neXtProt" id="NX_P47884"/>
<dbReference type="InParanoid" id="P47884"/>
<dbReference type="PAN-GO" id="P47884">
    <property type="GO annotations" value="3 GO annotations based on evolutionary models"/>
</dbReference>
<dbReference type="PathwayCommons" id="P47884"/>
<dbReference type="Reactome" id="R-HSA-9752946">
    <property type="pathway name" value="Expression and translocation of olfactory receptors"/>
</dbReference>
<dbReference type="Pharos" id="P47884">
    <property type="development level" value="Tdark"/>
</dbReference>
<dbReference type="PRO" id="PR:P47884"/>
<dbReference type="Proteomes" id="UP000005640">
    <property type="component" value="Unplaced"/>
</dbReference>
<dbReference type="RNAct" id="P47884">
    <property type="molecule type" value="protein"/>
</dbReference>
<dbReference type="GO" id="GO:0005886">
    <property type="term" value="C:plasma membrane"/>
    <property type="evidence" value="ECO:0000318"/>
    <property type="project" value="GO_Central"/>
</dbReference>
<dbReference type="GO" id="GO:0004930">
    <property type="term" value="F:G protein-coupled receptor activity"/>
    <property type="evidence" value="ECO:0000304"/>
    <property type="project" value="ProtInc"/>
</dbReference>
<dbReference type="GO" id="GO:0004984">
    <property type="term" value="F:olfactory receptor activity"/>
    <property type="evidence" value="ECO:0000318"/>
    <property type="project" value="GO_Central"/>
</dbReference>
<dbReference type="GO" id="GO:0007186">
    <property type="term" value="P:G protein-coupled receptor signaling pathway"/>
    <property type="evidence" value="ECO:0000304"/>
    <property type="project" value="ProtInc"/>
</dbReference>
<dbReference type="GO" id="GO:0007606">
    <property type="term" value="P:sensory perception of chemical stimulus"/>
    <property type="evidence" value="ECO:0000304"/>
    <property type="project" value="ProtInc"/>
</dbReference>
<dbReference type="GO" id="GO:0007165">
    <property type="term" value="P:signal transduction"/>
    <property type="evidence" value="ECO:0000318"/>
    <property type="project" value="GO_Central"/>
</dbReference>
<dbReference type="FunFam" id="1.20.1070.10:FF:000009">
    <property type="entry name" value="Olfactory receptor"/>
    <property type="match status" value="1"/>
</dbReference>
<dbReference type="Gene3D" id="1.20.1070.10">
    <property type="entry name" value="Rhodopsin 7-helix transmembrane proteins"/>
    <property type="match status" value="1"/>
</dbReference>
<dbReference type="InterPro" id="IPR000276">
    <property type="entry name" value="GPCR_Rhodpsn"/>
</dbReference>
<dbReference type="InterPro" id="IPR017452">
    <property type="entry name" value="GPCR_Rhodpsn_7TM"/>
</dbReference>
<dbReference type="InterPro" id="IPR000725">
    <property type="entry name" value="Olfact_rcpt"/>
</dbReference>
<dbReference type="PANTHER" id="PTHR48001">
    <property type="entry name" value="OLFACTORY RECEPTOR"/>
    <property type="match status" value="1"/>
</dbReference>
<dbReference type="Pfam" id="PF13853">
    <property type="entry name" value="7tm_4"/>
    <property type="match status" value="1"/>
</dbReference>
<dbReference type="PRINTS" id="PR00237">
    <property type="entry name" value="GPCRRHODOPSN"/>
</dbReference>
<dbReference type="PRINTS" id="PR00245">
    <property type="entry name" value="OLFACTORYR"/>
</dbReference>
<dbReference type="SUPFAM" id="SSF81321">
    <property type="entry name" value="Family A G protein-coupled receptor-like"/>
    <property type="match status" value="1"/>
</dbReference>
<dbReference type="PROSITE" id="PS00237">
    <property type="entry name" value="G_PROTEIN_RECEP_F1_1"/>
    <property type="match status" value="1"/>
</dbReference>
<dbReference type="PROSITE" id="PS50262">
    <property type="entry name" value="G_PROTEIN_RECEP_F1_2"/>
    <property type="match status" value="1"/>
</dbReference>
<comment type="function">
    <text evidence="3">Odorant receptor.</text>
</comment>
<comment type="subcellular location">
    <subcellularLocation>
        <location>Cell membrane</location>
        <topology>Multi-pass membrane protein</topology>
    </subcellularLocation>
</comment>
<comment type="similarity">
    <text evidence="2">Belongs to the G-protein coupled receptor 1 family.</text>
</comment>
<comment type="online information" name="Human Olfactory Receptor Data Exploratorium (HORDE)">
    <link uri="http://genome.weizmann.ac.il/horde/card/index/symbol:OR1D4"/>
</comment>
<feature type="chain" id="PRO_0000150421" description="Olfactory receptor 1D4">
    <location>
        <begin position="1"/>
        <end position="311"/>
    </location>
</feature>
<feature type="topological domain" description="Extracellular" evidence="1">
    <location>
        <begin position="1"/>
        <end position="25"/>
    </location>
</feature>
<feature type="transmembrane region" description="Helical; Name=1" evidence="1">
    <location>
        <begin position="26"/>
        <end position="49"/>
    </location>
</feature>
<feature type="topological domain" description="Cytoplasmic" evidence="1">
    <location>
        <begin position="50"/>
        <end position="57"/>
    </location>
</feature>
<feature type="transmembrane region" description="Helical; Name=2" evidence="1">
    <location>
        <begin position="58"/>
        <end position="79"/>
    </location>
</feature>
<feature type="topological domain" description="Extracellular" evidence="1">
    <location>
        <begin position="80"/>
        <end position="100"/>
    </location>
</feature>
<feature type="transmembrane region" description="Helical; Name=3" evidence="1">
    <location>
        <begin position="101"/>
        <end position="120"/>
    </location>
</feature>
<feature type="topological domain" description="Cytoplasmic" evidence="1">
    <location>
        <begin position="121"/>
        <end position="140"/>
    </location>
</feature>
<feature type="transmembrane region" description="Helical; Name=4" evidence="1">
    <location>
        <begin position="141"/>
        <end position="158"/>
    </location>
</feature>
<feature type="topological domain" description="Extracellular" evidence="1">
    <location>
        <begin position="159"/>
        <end position="196"/>
    </location>
</feature>
<feature type="transmembrane region" description="Helical; Name=5" evidence="1">
    <location>
        <begin position="197"/>
        <end position="220"/>
    </location>
</feature>
<feature type="topological domain" description="Cytoplasmic" evidence="1">
    <location>
        <begin position="221"/>
        <end position="237"/>
    </location>
</feature>
<feature type="transmembrane region" description="Helical; Name=6" evidence="1">
    <location>
        <begin position="238"/>
        <end position="260"/>
    </location>
</feature>
<feature type="topological domain" description="Extracellular" evidence="1">
    <location>
        <begin position="261"/>
        <end position="271"/>
    </location>
</feature>
<feature type="transmembrane region" description="Helical; Name=7" evidence="1">
    <location>
        <begin position="272"/>
        <end position="291"/>
    </location>
</feature>
<feature type="topological domain" description="Cytoplasmic" evidence="1">
    <location>
        <begin position="292"/>
        <end position="311"/>
    </location>
</feature>
<feature type="glycosylation site" description="N-linked (GlcNAc...) asparagine" evidence="1">
    <location>
        <position position="5"/>
    </location>
</feature>
<feature type="disulfide bond" evidence="2">
    <location>
        <begin position="97"/>
        <end position="189"/>
    </location>
</feature>
<feature type="sequence conflict" description="In Ref. 1; AAF37312." evidence="3" ref="1">
    <original>C</original>
    <variation>W</variation>
    <location>
        <position position="204"/>
    </location>
</feature>
<accession>P47884</accession>
<accession>Q96RA5</accession>
<accession>Q9UM75</accession>
<reference key="1">
    <citation type="journal article" date="2000" name="Genomics">
        <title>Sequence, structure, and evolution of a complete human olfactory receptor gene cluster.</title>
        <authorList>
            <person name="Glusman G."/>
            <person name="Sosinsky A."/>
            <person name="Ben-Asher E."/>
            <person name="Avidan N."/>
            <person name="Sonkin D."/>
            <person name="Bahar A."/>
            <person name="Rosenthal A."/>
            <person name="Clifton S."/>
            <person name="Roe B."/>
            <person name="Ferraz C."/>
            <person name="Demaille J.G."/>
            <person name="Lancet D."/>
        </authorList>
    </citation>
    <scope>NUCLEOTIDE SEQUENCE [GENOMIC DNA]</scope>
</reference>
<reference key="2">
    <citation type="journal article" date="1994" name="Hum. Mol. Genet.">
        <title>Olfactory receptor gene cluster on human chromosome 17: possible duplication of an ancestral receptor repertoire.</title>
        <authorList>
            <person name="Ben-Arie N."/>
            <person name="Lancet D."/>
            <person name="Taylor C."/>
            <person name="Khen M."/>
            <person name="Walker N."/>
            <person name="Ledbetter D.H."/>
            <person name="Carrozzo R."/>
            <person name="Patel K."/>
            <person name="Sheer D."/>
            <person name="Lehrach H."/>
            <person name="North M.A."/>
        </authorList>
    </citation>
    <scope>NUCLEOTIDE SEQUENCE [GENOMIC DNA] OF 68-282</scope>
</reference>
<reference key="3">
    <citation type="journal article" date="2002" name="Genomics">
        <title>DEFOG: a practical scheme for deciphering families of genes.</title>
        <authorList>
            <person name="Fuchs T."/>
            <person name="Malecova B."/>
            <person name="Linhart C."/>
            <person name="Sharan R."/>
            <person name="Khen M."/>
            <person name="Herwig R."/>
            <person name="Shmulevich D."/>
            <person name="Elkon R."/>
            <person name="Steinfath M."/>
            <person name="O'Brien J.K."/>
            <person name="Radelof U."/>
            <person name="Lehrach H."/>
            <person name="Lancet D."/>
            <person name="Shamir R."/>
        </authorList>
    </citation>
    <scope>NUCLEOTIDE SEQUENCE [GENOMIC DNA] OF 68-282</scope>
</reference>
<evidence type="ECO:0000255" key="1"/>
<evidence type="ECO:0000255" key="2">
    <source>
        <dbReference type="PROSITE-ProRule" id="PRU00521"/>
    </source>
</evidence>
<evidence type="ECO:0000305" key="3"/>
<keyword id="KW-1003">Cell membrane</keyword>
<keyword id="KW-1015">Disulfide bond</keyword>
<keyword id="KW-0297">G-protein coupled receptor</keyword>
<keyword id="KW-0325">Glycoprotein</keyword>
<keyword id="KW-0472">Membrane</keyword>
<keyword id="KW-0552">Olfaction</keyword>
<keyword id="KW-0675">Receptor</keyword>
<keyword id="KW-1185">Reference proteome</keyword>
<keyword id="KW-0716">Sensory transduction</keyword>
<keyword id="KW-0807">Transducer</keyword>
<keyword id="KW-0812">Transmembrane</keyword>
<keyword id="KW-1133">Transmembrane helix</keyword>
<name>OR1D4_HUMAN</name>
<protein>
    <recommendedName>
        <fullName>Olfactory receptor 1D4</fullName>
    </recommendedName>
    <alternativeName>
        <fullName>Olfactory receptor 17-30</fullName>
        <shortName>OR17-30</shortName>
    </alternativeName>
</protein>
<sequence length="311" mass="35227">MDGDNQSENSQFLLLGISESPEQQQILFWMFLSMYLVTVLGNVLIILAISSDSHLHTPMYFFLANLSFTDLFFVTNTIPKMLVNFQSQNKAISYAGCLTQLYFLVSLVTLDNLILAVMAYDRYVAICCPLHYVTAMSPGLCVLLLSLCWGLSVLYGLLLTFLLTRVTFCGPREIHYLFCDMYILLWLACSNTHIIHTALIATGCFIFLTLLGFMTTSYVRIVRTILQMPSASKKYKTFSTCASHLGVVSLFYGTLAMVYLQPLHTYSMKDSVATVMYAVLTPMMNPFIYSLRNKDMHGAPGRVLWRPFQRP</sequence>
<proteinExistence type="inferred from homology"/>
<gene>
    <name type="primary">OR1D4</name>
</gene>
<organism>
    <name type="scientific">Homo sapiens</name>
    <name type="common">Human</name>
    <dbReference type="NCBI Taxonomy" id="9606"/>
    <lineage>
        <taxon>Eukaryota</taxon>
        <taxon>Metazoa</taxon>
        <taxon>Chordata</taxon>
        <taxon>Craniata</taxon>
        <taxon>Vertebrata</taxon>
        <taxon>Euteleostomi</taxon>
        <taxon>Mammalia</taxon>
        <taxon>Eutheria</taxon>
        <taxon>Euarchontoglires</taxon>
        <taxon>Primates</taxon>
        <taxon>Haplorrhini</taxon>
        <taxon>Catarrhini</taxon>
        <taxon>Hominidae</taxon>
        <taxon>Homo</taxon>
    </lineage>
</organism>